<organism>
    <name type="scientific">Prochlorococcus marinus (strain MIT 9215)</name>
    <dbReference type="NCBI Taxonomy" id="93060"/>
    <lineage>
        <taxon>Bacteria</taxon>
        <taxon>Bacillati</taxon>
        <taxon>Cyanobacteriota</taxon>
        <taxon>Cyanophyceae</taxon>
        <taxon>Synechococcales</taxon>
        <taxon>Prochlorococcaceae</taxon>
        <taxon>Prochlorococcus</taxon>
    </lineage>
</organism>
<reference key="1">
    <citation type="journal article" date="2007" name="PLoS Genet.">
        <title>Patterns and implications of gene gain and loss in the evolution of Prochlorococcus.</title>
        <authorList>
            <person name="Kettler G.C."/>
            <person name="Martiny A.C."/>
            <person name="Huang K."/>
            <person name="Zucker J."/>
            <person name="Coleman M.L."/>
            <person name="Rodrigue S."/>
            <person name="Chen F."/>
            <person name="Lapidus A."/>
            <person name="Ferriera S."/>
            <person name="Johnson J."/>
            <person name="Steglich C."/>
            <person name="Church G.M."/>
            <person name="Richardson P."/>
            <person name="Chisholm S.W."/>
        </authorList>
    </citation>
    <scope>NUCLEOTIDE SEQUENCE [LARGE SCALE GENOMIC DNA]</scope>
    <source>
        <strain>MIT 9215</strain>
    </source>
</reference>
<comment type="function">
    <text evidence="1">Peptide chain release factor 1 directs the termination of translation in response to the peptide chain termination codons UAG and UAA.</text>
</comment>
<comment type="subcellular location">
    <subcellularLocation>
        <location evidence="1">Cytoplasm</location>
    </subcellularLocation>
</comment>
<comment type="PTM">
    <text evidence="1">Methylated by PrmC. Methylation increases the termination efficiency of RF1.</text>
</comment>
<comment type="similarity">
    <text evidence="1">Belongs to the prokaryotic/mitochondrial release factor family.</text>
</comment>
<dbReference type="EMBL" id="CP000825">
    <property type="protein sequence ID" value="ABV51414.1"/>
    <property type="molecule type" value="Genomic_DNA"/>
</dbReference>
<dbReference type="RefSeq" id="WP_012008427.1">
    <property type="nucleotide sequence ID" value="NC_009840.1"/>
</dbReference>
<dbReference type="SMR" id="A8G733"/>
<dbReference type="STRING" id="93060.P9215_18011"/>
<dbReference type="KEGG" id="pmh:P9215_18011"/>
<dbReference type="eggNOG" id="COG0216">
    <property type="taxonomic scope" value="Bacteria"/>
</dbReference>
<dbReference type="HOGENOM" id="CLU_036856_0_1_3"/>
<dbReference type="OrthoDB" id="9806673at2"/>
<dbReference type="Proteomes" id="UP000002014">
    <property type="component" value="Chromosome"/>
</dbReference>
<dbReference type="GO" id="GO:0005737">
    <property type="term" value="C:cytoplasm"/>
    <property type="evidence" value="ECO:0007669"/>
    <property type="project" value="UniProtKB-SubCell"/>
</dbReference>
<dbReference type="GO" id="GO:0016149">
    <property type="term" value="F:translation release factor activity, codon specific"/>
    <property type="evidence" value="ECO:0007669"/>
    <property type="project" value="UniProtKB-UniRule"/>
</dbReference>
<dbReference type="FunFam" id="3.30.160.20:FF:000004">
    <property type="entry name" value="Peptide chain release factor 1"/>
    <property type="match status" value="1"/>
</dbReference>
<dbReference type="FunFam" id="3.30.70.1660:FF:000002">
    <property type="entry name" value="Peptide chain release factor 1"/>
    <property type="match status" value="1"/>
</dbReference>
<dbReference type="Gene3D" id="3.30.160.20">
    <property type="match status" value="1"/>
</dbReference>
<dbReference type="Gene3D" id="3.30.70.1660">
    <property type="match status" value="1"/>
</dbReference>
<dbReference type="Gene3D" id="6.10.140.1950">
    <property type="match status" value="1"/>
</dbReference>
<dbReference type="HAMAP" id="MF_00093">
    <property type="entry name" value="Rel_fac_1"/>
    <property type="match status" value="1"/>
</dbReference>
<dbReference type="InterPro" id="IPR005139">
    <property type="entry name" value="PCRF"/>
</dbReference>
<dbReference type="InterPro" id="IPR000352">
    <property type="entry name" value="Pep_chain_release_fac_I"/>
</dbReference>
<dbReference type="InterPro" id="IPR045853">
    <property type="entry name" value="Pep_chain_release_fac_I_sf"/>
</dbReference>
<dbReference type="InterPro" id="IPR050057">
    <property type="entry name" value="Prokaryotic/Mito_RF"/>
</dbReference>
<dbReference type="InterPro" id="IPR004373">
    <property type="entry name" value="RF-1"/>
</dbReference>
<dbReference type="NCBIfam" id="TIGR00019">
    <property type="entry name" value="prfA"/>
    <property type="match status" value="1"/>
</dbReference>
<dbReference type="NCBIfam" id="NF001859">
    <property type="entry name" value="PRK00591.1"/>
    <property type="match status" value="1"/>
</dbReference>
<dbReference type="PANTHER" id="PTHR43804">
    <property type="entry name" value="LD18447P"/>
    <property type="match status" value="1"/>
</dbReference>
<dbReference type="PANTHER" id="PTHR43804:SF8">
    <property type="entry name" value="PEPTIDE CHAIN RELEASE FACTOR APG3, CHLOROPLASTIC"/>
    <property type="match status" value="1"/>
</dbReference>
<dbReference type="Pfam" id="PF03462">
    <property type="entry name" value="PCRF"/>
    <property type="match status" value="1"/>
</dbReference>
<dbReference type="Pfam" id="PF00472">
    <property type="entry name" value="RF-1"/>
    <property type="match status" value="1"/>
</dbReference>
<dbReference type="SMART" id="SM00937">
    <property type="entry name" value="PCRF"/>
    <property type="match status" value="1"/>
</dbReference>
<dbReference type="SUPFAM" id="SSF75620">
    <property type="entry name" value="Release factor"/>
    <property type="match status" value="1"/>
</dbReference>
<dbReference type="PROSITE" id="PS00745">
    <property type="entry name" value="RF_PROK_I"/>
    <property type="match status" value="1"/>
</dbReference>
<gene>
    <name evidence="1" type="primary">prfA</name>
    <name type="ordered locus">P9215_18011</name>
</gene>
<feature type="chain" id="PRO_1000093487" description="Peptide chain release factor 1">
    <location>
        <begin position="1"/>
        <end position="364"/>
    </location>
</feature>
<feature type="modified residue" description="N5-methylglutamine" evidence="1">
    <location>
        <position position="239"/>
    </location>
</feature>
<keyword id="KW-0963">Cytoplasm</keyword>
<keyword id="KW-0488">Methylation</keyword>
<keyword id="KW-0648">Protein biosynthesis</keyword>
<protein>
    <recommendedName>
        <fullName evidence="1">Peptide chain release factor 1</fullName>
        <shortName evidence="1">RF-1</shortName>
    </recommendedName>
</protein>
<name>RF1_PROM2</name>
<accession>A8G733</accession>
<evidence type="ECO:0000255" key="1">
    <source>
        <dbReference type="HAMAP-Rule" id="MF_00093"/>
    </source>
</evidence>
<sequence>MEYSTLIARLKTASVSFENLEVQLADPDIANDPKKLESIARERSKLEPLVIDFNKLLDTDKEIEDSKNLLKENRNDKEMESLINEELIILEEFKNELIQKTTIALLPKDPRDERSVMLEIRAGAGGSEACIWAGDLARMYERYGQKVGWSVKSVSASESDMGGFKELVISVKGDSVYSQLKFEAGVHRVQRVPATESQGRVHTSTATVAVMPEADPVEVKIDPTDLEIGTARSGGAGGQNVNKVETAIDLLHKPTGIRVFCTQERSQLQNRERAMEILRAKLYEIQLKEANAKERSQRLSQVGTGDRSEKIRTYNFKDNRTTDHRLGSNFSLEPILAGQLDEVINACIAQEQKRMLEDFANEIN</sequence>
<proteinExistence type="inferred from homology"/>